<accession>A6ZNJ7</accession>
<organism>
    <name type="scientific">Saccharomyces cerevisiae (strain YJM789)</name>
    <name type="common">Baker's yeast</name>
    <dbReference type="NCBI Taxonomy" id="307796"/>
    <lineage>
        <taxon>Eukaryota</taxon>
        <taxon>Fungi</taxon>
        <taxon>Dikarya</taxon>
        <taxon>Ascomycota</taxon>
        <taxon>Saccharomycotina</taxon>
        <taxon>Saccharomycetes</taxon>
        <taxon>Saccharomycetales</taxon>
        <taxon>Saccharomycetaceae</taxon>
        <taxon>Saccharomyces</taxon>
    </lineage>
</organism>
<reference key="1">
    <citation type="journal article" date="2007" name="Proc. Natl. Acad. Sci. U.S.A.">
        <title>Genome sequencing and comparative analysis of Saccharomyces cerevisiae strain YJM789.</title>
        <authorList>
            <person name="Wei W."/>
            <person name="McCusker J.H."/>
            <person name="Hyman R.W."/>
            <person name="Jones T."/>
            <person name="Ning Y."/>
            <person name="Cao Z."/>
            <person name="Gu Z."/>
            <person name="Bruno D."/>
            <person name="Miranda M."/>
            <person name="Nguyen M."/>
            <person name="Wilhelmy J."/>
            <person name="Komp C."/>
            <person name="Tamse R."/>
            <person name="Wang X."/>
            <person name="Jia P."/>
            <person name="Luedi P."/>
            <person name="Oefner P.J."/>
            <person name="David L."/>
            <person name="Dietrich F.S."/>
            <person name="Li Y."/>
            <person name="Davis R.W."/>
            <person name="Steinmetz L.M."/>
        </authorList>
    </citation>
    <scope>NUCLEOTIDE SEQUENCE [LARGE SCALE GENOMIC DNA]</scope>
    <source>
        <strain>YJM789</strain>
    </source>
</reference>
<keyword id="KW-0256">Endoplasmic reticulum</keyword>
<keyword id="KW-1017">Isopeptide bond</keyword>
<keyword id="KW-0445">Lipid transport</keyword>
<keyword id="KW-0446">Lipid-binding</keyword>
<keyword id="KW-0472">Membrane</keyword>
<keyword id="KW-0496">Mitochondrion</keyword>
<keyword id="KW-1000">Mitochondrion outer membrane</keyword>
<keyword id="KW-0813">Transport</keyword>
<keyword id="KW-0832">Ubl conjugation</keyword>
<protein>
    <recommendedName>
        <fullName evidence="2">Mitochondrial distribution and morphology protein 12</fullName>
    </recommendedName>
    <alternativeName>
        <fullName evidence="2">Mitochondrial inheritance component MDM12</fullName>
    </alternativeName>
</protein>
<proteinExistence type="inferred from homology"/>
<sequence>MSFDINWSTLESDNRLNDLIRKHLNSYLQNTQLPSYVSNLRVLDFDLGKVGPAITLKEITDPLDEFYDSIREEADQETEENNDNKEDSEHICPDRTIANHEGPKDDFEAPVVMPSPNDIQFLLEVEYKGDLLVTIGADLVLNYPVEKFMTLPVKLSISDIGLHSLCIVACLSKQLFLSFLCDVSDPALDDNQTVLDPKGPILAATKPLERISIVRSMKIETEIGEQYQGQGSVLRSVGELEQFLFTIFKDFLRKELAWPSWINLDFNDGDE</sequence>
<gene>
    <name evidence="2" type="primary">MDM12</name>
    <name type="ORF">SCY_5065</name>
</gene>
<feature type="chain" id="PRO_0000384311" description="Mitochondrial distribution and morphology protein 12">
    <location>
        <begin position="1"/>
        <end position="271"/>
    </location>
</feature>
<feature type="domain" description="SMP-LTD" evidence="2">
    <location>
        <begin position="1"/>
        <end position="267"/>
    </location>
</feature>
<feature type="cross-link" description="Glycyl lysine isopeptide (Lys-Gly) (interchain with G-Cter in ubiquitin)" evidence="1">
    <location>
        <position position="49"/>
    </location>
</feature>
<comment type="function">
    <text evidence="2">Component of the ERMES/MDM complex, which serves as a molecular tether to connect the endoplasmic reticulum (ER) and mitochondria. Components of this complex are involved in the control of mitochondrial shape and protein biogenesis, and function in nonvesicular lipid trafficking between the ER and mitochondria. MDM12 is required for the interaction of the ER-resident membrane protein MMM1 and the outer mitochondrial membrane-resident beta-barrel protein MDM10. The MDM12-MMM1 subcomplex functions in the major beta-barrel assembly pathway that is responsible for biogenesis of all mitochondrial outer membrane beta-barrel proteins, and acts in a late step after the SAM complex. The MDM10-MDM12-MMM1 subcomplex further acts in the TOM40-specific pathway after the action of the MDM12-MMM1 complex. Essential for establishing and maintaining the structure of mitochondria and maintenance of mtDNA nucleoids.</text>
</comment>
<comment type="subunit">
    <text evidence="2">Component of the ER-mitochondria encounter structure (ERMES) or MDM complex, composed of MMM1, MDM10, MDM12 and MDM34. A MMM1 homodimer associates with one molecule of MDM12 on each side in a pairwise head-to-tail manner, and the SMP-LTD domains of MMM1 and MDM12 generate a continuous hydrophobic tunnel for phospholipid trafficking. Interacts with PUF3.</text>
</comment>
<comment type="subcellular location">
    <subcellularLocation>
        <location evidence="2">Mitochondrion outer membrane</location>
        <topology evidence="2">Peripheral membrane protein</topology>
        <orientation evidence="2">Cytoplasmic side</orientation>
    </subcellularLocation>
    <subcellularLocation>
        <location evidence="2">Endoplasmic reticulum membrane</location>
        <topology evidence="2">Peripheral membrane protein</topology>
        <orientation evidence="2">Cytoplasmic side</orientation>
    </subcellularLocation>
    <text evidence="2">The ERMES/MDM complex localizes to a few discrete foci (around 10 per single cell), that represent mitochondria-endoplasmic reticulum junctions. These foci are often found next to mtDNA nucleoids.</text>
</comment>
<comment type="domain">
    <text evidence="2">The SMP-LTD domain is a barrel-like domain that can bind various types of glycerophospholipids in its interior and mediate their transfer between two adjacent bilayers.</text>
</comment>
<comment type="similarity">
    <text evidence="2">Belongs to the MDM12 family.</text>
</comment>
<evidence type="ECO:0000250" key="1">
    <source>
        <dbReference type="UniProtKB" id="Q92328"/>
    </source>
</evidence>
<evidence type="ECO:0000255" key="2">
    <source>
        <dbReference type="HAMAP-Rule" id="MF_03104"/>
    </source>
</evidence>
<dbReference type="EMBL" id="AAFW02000030">
    <property type="protein sequence ID" value="EDN63862.1"/>
    <property type="molecule type" value="Genomic_DNA"/>
</dbReference>
<dbReference type="SMR" id="A6ZNJ7"/>
<dbReference type="HOGENOM" id="CLU_026794_2_0_1"/>
<dbReference type="Proteomes" id="UP000007060">
    <property type="component" value="Unassembled WGS sequence"/>
</dbReference>
<dbReference type="GO" id="GO:0005789">
    <property type="term" value="C:endoplasmic reticulum membrane"/>
    <property type="evidence" value="ECO:0007669"/>
    <property type="project" value="UniProtKB-SubCell"/>
</dbReference>
<dbReference type="GO" id="GO:0032865">
    <property type="term" value="C:ERMES complex"/>
    <property type="evidence" value="ECO:0007669"/>
    <property type="project" value="UniProtKB-UniRule"/>
</dbReference>
<dbReference type="GO" id="GO:0008289">
    <property type="term" value="F:lipid binding"/>
    <property type="evidence" value="ECO:0007669"/>
    <property type="project" value="UniProtKB-KW"/>
</dbReference>
<dbReference type="GO" id="GO:0000002">
    <property type="term" value="P:mitochondrial genome maintenance"/>
    <property type="evidence" value="ECO:0007669"/>
    <property type="project" value="UniProtKB-UniRule"/>
</dbReference>
<dbReference type="GO" id="GO:1990456">
    <property type="term" value="P:mitochondrion-endoplasmic reticulum membrane tethering"/>
    <property type="evidence" value="ECO:0007669"/>
    <property type="project" value="TreeGrafter"/>
</dbReference>
<dbReference type="GO" id="GO:0015914">
    <property type="term" value="P:phospholipid transport"/>
    <property type="evidence" value="ECO:0007669"/>
    <property type="project" value="TreeGrafter"/>
</dbReference>
<dbReference type="GO" id="GO:0045040">
    <property type="term" value="P:protein insertion into mitochondrial outer membrane"/>
    <property type="evidence" value="ECO:0007669"/>
    <property type="project" value="UniProtKB-UniRule"/>
</dbReference>
<dbReference type="CDD" id="cd21672">
    <property type="entry name" value="SMP_Mdm12"/>
    <property type="match status" value="1"/>
</dbReference>
<dbReference type="HAMAP" id="MF_03104">
    <property type="entry name" value="Mdm12"/>
    <property type="match status" value="1"/>
</dbReference>
<dbReference type="InterPro" id="IPR027532">
    <property type="entry name" value="Mdm12"/>
</dbReference>
<dbReference type="InterPro" id="IPR031468">
    <property type="entry name" value="SMP_LBD"/>
</dbReference>
<dbReference type="PANTHER" id="PTHR28204">
    <property type="entry name" value="MITOCHONDRIAL DISTRIBUTION AND MORPHOLOGY PROTEIN 12"/>
    <property type="match status" value="1"/>
</dbReference>
<dbReference type="PANTHER" id="PTHR28204:SF1">
    <property type="entry name" value="MITOCHONDRIAL DISTRIBUTION AND MORPHOLOGY PROTEIN 12"/>
    <property type="match status" value="1"/>
</dbReference>
<dbReference type="PROSITE" id="PS51847">
    <property type="entry name" value="SMP"/>
    <property type="match status" value="1"/>
</dbReference>
<name>MDM12_YEAS7</name>